<comment type="function">
    <text evidence="1">Cell wall formation. Catalyzes the addition of glutamate to the nucleotide precursor UDP-N-acetylmuramoyl-L-alanine (UMA).</text>
</comment>
<comment type="catalytic activity">
    <reaction evidence="1">
        <text>UDP-N-acetyl-alpha-D-muramoyl-L-alanine + D-glutamate + ATP = UDP-N-acetyl-alpha-D-muramoyl-L-alanyl-D-glutamate + ADP + phosphate + H(+)</text>
        <dbReference type="Rhea" id="RHEA:16429"/>
        <dbReference type="ChEBI" id="CHEBI:15378"/>
        <dbReference type="ChEBI" id="CHEBI:29986"/>
        <dbReference type="ChEBI" id="CHEBI:30616"/>
        <dbReference type="ChEBI" id="CHEBI:43474"/>
        <dbReference type="ChEBI" id="CHEBI:83898"/>
        <dbReference type="ChEBI" id="CHEBI:83900"/>
        <dbReference type="ChEBI" id="CHEBI:456216"/>
        <dbReference type="EC" id="6.3.2.9"/>
    </reaction>
</comment>
<comment type="pathway">
    <text evidence="1">Cell wall biogenesis; peptidoglycan biosynthesis.</text>
</comment>
<comment type="subcellular location">
    <subcellularLocation>
        <location evidence="1">Cytoplasm</location>
    </subcellularLocation>
</comment>
<comment type="similarity">
    <text evidence="1">Belongs to the MurCDEF family.</text>
</comment>
<feature type="chain" id="PRO_0000108987" description="UDP-N-acetylmuramoylalanine--D-glutamate ligase">
    <location>
        <begin position="1"/>
        <end position="504"/>
    </location>
</feature>
<feature type="binding site" evidence="1">
    <location>
        <begin position="129"/>
        <end position="135"/>
    </location>
    <ligand>
        <name>ATP</name>
        <dbReference type="ChEBI" id="CHEBI:30616"/>
    </ligand>
</feature>
<keyword id="KW-0067">ATP-binding</keyword>
<keyword id="KW-0131">Cell cycle</keyword>
<keyword id="KW-0132">Cell division</keyword>
<keyword id="KW-0133">Cell shape</keyword>
<keyword id="KW-0961">Cell wall biogenesis/degradation</keyword>
<keyword id="KW-0963">Cytoplasm</keyword>
<keyword id="KW-0436">Ligase</keyword>
<keyword id="KW-0547">Nucleotide-binding</keyword>
<keyword id="KW-0573">Peptidoglycan synthesis</keyword>
<keyword id="KW-1185">Reference proteome</keyword>
<name>MURD_BURMA</name>
<accession>Q62GS5</accession>
<evidence type="ECO:0000255" key="1">
    <source>
        <dbReference type="HAMAP-Rule" id="MF_00639"/>
    </source>
</evidence>
<organism>
    <name type="scientific">Burkholderia mallei (strain ATCC 23344)</name>
    <dbReference type="NCBI Taxonomy" id="243160"/>
    <lineage>
        <taxon>Bacteria</taxon>
        <taxon>Pseudomonadati</taxon>
        <taxon>Pseudomonadota</taxon>
        <taxon>Betaproteobacteria</taxon>
        <taxon>Burkholderiales</taxon>
        <taxon>Burkholderiaceae</taxon>
        <taxon>Burkholderia</taxon>
        <taxon>pseudomallei group</taxon>
    </lineage>
</organism>
<gene>
    <name evidence="1" type="primary">murD</name>
    <name type="ordered locus">BMA2553</name>
</gene>
<dbReference type="EC" id="6.3.2.9" evidence="1"/>
<dbReference type="EMBL" id="CP000010">
    <property type="protein sequence ID" value="AAU50046.1"/>
    <property type="molecule type" value="Genomic_DNA"/>
</dbReference>
<dbReference type="RefSeq" id="WP_004195134.1">
    <property type="nucleotide sequence ID" value="NC_006348.1"/>
</dbReference>
<dbReference type="RefSeq" id="YP_104096.1">
    <property type="nucleotide sequence ID" value="NC_006348.1"/>
</dbReference>
<dbReference type="SMR" id="Q62GS5"/>
<dbReference type="GeneID" id="92980245"/>
<dbReference type="KEGG" id="bma:BMA2553"/>
<dbReference type="PATRIC" id="fig|243160.12.peg.2630"/>
<dbReference type="eggNOG" id="COG0771">
    <property type="taxonomic scope" value="Bacteria"/>
</dbReference>
<dbReference type="HOGENOM" id="CLU_032540_1_1_4"/>
<dbReference type="UniPathway" id="UPA00219"/>
<dbReference type="Proteomes" id="UP000006693">
    <property type="component" value="Chromosome 1"/>
</dbReference>
<dbReference type="GO" id="GO:0005737">
    <property type="term" value="C:cytoplasm"/>
    <property type="evidence" value="ECO:0007669"/>
    <property type="project" value="UniProtKB-SubCell"/>
</dbReference>
<dbReference type="GO" id="GO:0005524">
    <property type="term" value="F:ATP binding"/>
    <property type="evidence" value="ECO:0007669"/>
    <property type="project" value="UniProtKB-UniRule"/>
</dbReference>
<dbReference type="GO" id="GO:0008764">
    <property type="term" value="F:UDP-N-acetylmuramoylalanine-D-glutamate ligase activity"/>
    <property type="evidence" value="ECO:0007669"/>
    <property type="project" value="UniProtKB-UniRule"/>
</dbReference>
<dbReference type="GO" id="GO:0051301">
    <property type="term" value="P:cell division"/>
    <property type="evidence" value="ECO:0007669"/>
    <property type="project" value="UniProtKB-KW"/>
</dbReference>
<dbReference type="GO" id="GO:0071555">
    <property type="term" value="P:cell wall organization"/>
    <property type="evidence" value="ECO:0007669"/>
    <property type="project" value="UniProtKB-KW"/>
</dbReference>
<dbReference type="GO" id="GO:0009252">
    <property type="term" value="P:peptidoglycan biosynthetic process"/>
    <property type="evidence" value="ECO:0007669"/>
    <property type="project" value="UniProtKB-UniRule"/>
</dbReference>
<dbReference type="GO" id="GO:0008360">
    <property type="term" value="P:regulation of cell shape"/>
    <property type="evidence" value="ECO:0007669"/>
    <property type="project" value="UniProtKB-KW"/>
</dbReference>
<dbReference type="Gene3D" id="3.90.190.20">
    <property type="entry name" value="Mur ligase, C-terminal domain"/>
    <property type="match status" value="1"/>
</dbReference>
<dbReference type="Gene3D" id="3.40.1190.10">
    <property type="entry name" value="Mur-like, catalytic domain"/>
    <property type="match status" value="1"/>
</dbReference>
<dbReference type="Gene3D" id="3.40.50.720">
    <property type="entry name" value="NAD(P)-binding Rossmann-like Domain"/>
    <property type="match status" value="1"/>
</dbReference>
<dbReference type="HAMAP" id="MF_00639">
    <property type="entry name" value="MurD"/>
    <property type="match status" value="1"/>
</dbReference>
<dbReference type="InterPro" id="IPR036565">
    <property type="entry name" value="Mur-like_cat_sf"/>
</dbReference>
<dbReference type="InterPro" id="IPR004101">
    <property type="entry name" value="Mur_ligase_C"/>
</dbReference>
<dbReference type="InterPro" id="IPR036615">
    <property type="entry name" value="Mur_ligase_C_dom_sf"/>
</dbReference>
<dbReference type="InterPro" id="IPR013221">
    <property type="entry name" value="Mur_ligase_cen"/>
</dbReference>
<dbReference type="InterPro" id="IPR005762">
    <property type="entry name" value="MurD"/>
</dbReference>
<dbReference type="NCBIfam" id="TIGR01087">
    <property type="entry name" value="murD"/>
    <property type="match status" value="1"/>
</dbReference>
<dbReference type="PANTHER" id="PTHR43692">
    <property type="entry name" value="UDP-N-ACETYLMURAMOYLALANINE--D-GLUTAMATE LIGASE"/>
    <property type="match status" value="1"/>
</dbReference>
<dbReference type="PANTHER" id="PTHR43692:SF1">
    <property type="entry name" value="UDP-N-ACETYLMURAMOYLALANINE--D-GLUTAMATE LIGASE"/>
    <property type="match status" value="1"/>
</dbReference>
<dbReference type="Pfam" id="PF02875">
    <property type="entry name" value="Mur_ligase_C"/>
    <property type="match status" value="1"/>
</dbReference>
<dbReference type="Pfam" id="PF08245">
    <property type="entry name" value="Mur_ligase_M"/>
    <property type="match status" value="1"/>
</dbReference>
<dbReference type="Pfam" id="PF21799">
    <property type="entry name" value="MurD-like_N"/>
    <property type="match status" value="1"/>
</dbReference>
<dbReference type="SUPFAM" id="SSF51984">
    <property type="entry name" value="MurCD N-terminal domain"/>
    <property type="match status" value="1"/>
</dbReference>
<dbReference type="SUPFAM" id="SSF53623">
    <property type="entry name" value="MurD-like peptide ligases, catalytic domain"/>
    <property type="match status" value="1"/>
</dbReference>
<dbReference type="SUPFAM" id="SSF53244">
    <property type="entry name" value="MurD-like peptide ligases, peptide-binding domain"/>
    <property type="match status" value="1"/>
</dbReference>
<protein>
    <recommendedName>
        <fullName evidence="1">UDP-N-acetylmuramoylalanine--D-glutamate ligase</fullName>
        <ecNumber evidence="1">6.3.2.9</ecNumber>
    </recommendedName>
    <alternativeName>
        <fullName evidence="1">D-glutamic acid-adding enzyme</fullName>
    </alternativeName>
    <alternativeName>
        <fullName evidence="1">UDP-N-acetylmuramoyl-L-alanyl-D-glutamate synthetase</fullName>
    </alternativeName>
</protein>
<reference key="1">
    <citation type="journal article" date="2004" name="Proc. Natl. Acad. Sci. U.S.A.">
        <title>Structural flexibility in the Burkholderia mallei genome.</title>
        <authorList>
            <person name="Nierman W.C."/>
            <person name="DeShazer D."/>
            <person name="Kim H.S."/>
            <person name="Tettelin H."/>
            <person name="Nelson K.E."/>
            <person name="Feldblyum T.V."/>
            <person name="Ulrich R.L."/>
            <person name="Ronning C.M."/>
            <person name="Brinkac L.M."/>
            <person name="Daugherty S.C."/>
            <person name="Davidsen T.D."/>
            <person name="DeBoy R.T."/>
            <person name="Dimitrov G."/>
            <person name="Dodson R.J."/>
            <person name="Durkin A.S."/>
            <person name="Gwinn M.L."/>
            <person name="Haft D.H."/>
            <person name="Khouri H.M."/>
            <person name="Kolonay J.F."/>
            <person name="Madupu R."/>
            <person name="Mohammoud Y."/>
            <person name="Nelson W.C."/>
            <person name="Radune D."/>
            <person name="Romero C.M."/>
            <person name="Sarria S."/>
            <person name="Selengut J."/>
            <person name="Shamblin C."/>
            <person name="Sullivan S.A."/>
            <person name="White O."/>
            <person name="Yu Y."/>
            <person name="Zafar N."/>
            <person name="Zhou L."/>
            <person name="Fraser C.M."/>
        </authorList>
    </citation>
    <scope>NUCLEOTIDE SEQUENCE [LARGE SCALE GENOMIC DNA]</scope>
    <source>
        <strain>ATCC 23344</strain>
    </source>
</reference>
<proteinExistence type="inferred from homology"/>
<sequence>MFGDRQRPMVLVLGLGESGLAIARWCARHGCRLRVADTCETPPNLAALTAAGVDFEFVGGAFSPALVDGGIELVALSPGLSPLAEDLAPLVAAARERGIPVWGELEFFAQALAALGANGYAPKVIAITGTNGKTTTTSLAGLLCERAGKKVAVAGNISPAMLDKLTEAIDAAALPDVWVLELSSFQLDTAHTFAPDAATILNITQDHLDWHGGFAAYAAAKGRVFGPRTVRVLNRDDAEVMRFAPPAAAADAPRAVTFGLNEPAADGDYGLLRENGIAWLVEAIDRDGADAPAAPSRRRKQEAANPPDIALKRLMPADALRIRGLHNAANALAAYALARAIGLPAAPLLHGLREYRGEPHRVEVIATLDGVDYVDDSKGTNVGATVAALDGLAQRAVLIAGGDGKGQDFEPLAAPVARWCRAVMLIGRDAPALREALADTGVPLADHATLEAAVRAASALAQPGDAVLLSPACASLDMFRNYAHRADVFRSAVEDIALEKGTTL</sequence>